<proteinExistence type="inferred from homology"/>
<organism>
    <name type="scientific">Aedes aegypti</name>
    <name type="common">Yellowfever mosquito</name>
    <name type="synonym">Culex aegypti</name>
    <dbReference type="NCBI Taxonomy" id="7159"/>
    <lineage>
        <taxon>Eukaryota</taxon>
        <taxon>Metazoa</taxon>
        <taxon>Ecdysozoa</taxon>
        <taxon>Arthropoda</taxon>
        <taxon>Hexapoda</taxon>
        <taxon>Insecta</taxon>
        <taxon>Pterygota</taxon>
        <taxon>Neoptera</taxon>
        <taxon>Endopterygota</taxon>
        <taxon>Diptera</taxon>
        <taxon>Nematocera</taxon>
        <taxon>Culicoidea</taxon>
        <taxon>Culicidae</taxon>
        <taxon>Culicinae</taxon>
        <taxon>Aedini</taxon>
        <taxon>Aedes</taxon>
        <taxon>Stegomyia</taxon>
    </lineage>
</organism>
<gene>
    <name type="primary">MED8</name>
    <name type="ORF">AAEL010861</name>
</gene>
<reference key="1">
    <citation type="journal article" date="2007" name="Science">
        <title>Genome sequence of Aedes aegypti, a major arbovirus vector.</title>
        <authorList>
            <person name="Nene V."/>
            <person name="Wortman J.R."/>
            <person name="Lawson D."/>
            <person name="Haas B.J."/>
            <person name="Kodira C.D."/>
            <person name="Tu Z.J."/>
            <person name="Loftus B.J."/>
            <person name="Xi Z."/>
            <person name="Megy K."/>
            <person name="Grabherr M."/>
            <person name="Ren Q."/>
            <person name="Zdobnov E.M."/>
            <person name="Lobo N.F."/>
            <person name="Campbell K.S."/>
            <person name="Brown S.E."/>
            <person name="Bonaldo M.F."/>
            <person name="Zhu J."/>
            <person name="Sinkins S.P."/>
            <person name="Hogenkamp D.G."/>
            <person name="Amedeo P."/>
            <person name="Arensburger P."/>
            <person name="Atkinson P.W."/>
            <person name="Bidwell S.L."/>
            <person name="Biedler J."/>
            <person name="Birney E."/>
            <person name="Bruggner R.V."/>
            <person name="Costas J."/>
            <person name="Coy M.R."/>
            <person name="Crabtree J."/>
            <person name="Crawford M."/>
            <person name="DeBruyn B."/>
            <person name="DeCaprio D."/>
            <person name="Eiglmeier K."/>
            <person name="Eisenstadt E."/>
            <person name="El-Dorry H."/>
            <person name="Gelbart W.M."/>
            <person name="Gomes S.L."/>
            <person name="Hammond M."/>
            <person name="Hannick L.I."/>
            <person name="Hogan J.R."/>
            <person name="Holmes M.H."/>
            <person name="Jaffe D."/>
            <person name="Johnston S.J."/>
            <person name="Kennedy R.C."/>
            <person name="Koo H."/>
            <person name="Kravitz S."/>
            <person name="Kriventseva E.V."/>
            <person name="Kulp D."/>
            <person name="Labutti K."/>
            <person name="Lee E."/>
            <person name="Li S."/>
            <person name="Lovin D.D."/>
            <person name="Mao C."/>
            <person name="Mauceli E."/>
            <person name="Menck C.F."/>
            <person name="Miller J.R."/>
            <person name="Montgomery P."/>
            <person name="Mori A."/>
            <person name="Nascimento A.L."/>
            <person name="Naveira H.F."/>
            <person name="Nusbaum C."/>
            <person name="O'Leary S.B."/>
            <person name="Orvis J."/>
            <person name="Pertea M."/>
            <person name="Quesneville H."/>
            <person name="Reidenbach K.R."/>
            <person name="Rogers Y.-H.C."/>
            <person name="Roth C.W."/>
            <person name="Schneider J.R."/>
            <person name="Schatz M."/>
            <person name="Shumway M."/>
            <person name="Stanke M."/>
            <person name="Stinson E.O."/>
            <person name="Tubio J.M.C."/>
            <person name="Vanzee J.P."/>
            <person name="Verjovski-Almeida S."/>
            <person name="Werner D."/>
            <person name="White O.R."/>
            <person name="Wyder S."/>
            <person name="Zeng Q."/>
            <person name="Zhao Q."/>
            <person name="Zhao Y."/>
            <person name="Hill C.A."/>
            <person name="Raikhel A.S."/>
            <person name="Soares M.B."/>
            <person name="Knudson D.L."/>
            <person name="Lee N.H."/>
            <person name="Galagan J."/>
            <person name="Salzberg S.L."/>
            <person name="Paulsen I.T."/>
            <person name="Dimopoulos G."/>
            <person name="Collins F.H."/>
            <person name="Bruce B."/>
            <person name="Fraser-Liggett C.M."/>
            <person name="Severson D.W."/>
        </authorList>
    </citation>
    <scope>NUCLEOTIDE SEQUENCE [LARGE SCALE GENOMIC DNA]</scope>
    <source>
        <strain>LVPib12</strain>
    </source>
</reference>
<protein>
    <recommendedName>
        <fullName>Mediator of RNA polymerase II transcription subunit 8</fullName>
    </recommendedName>
    <alternativeName>
        <fullName>Mediator complex subunit 8</fullName>
    </alternativeName>
</protein>
<comment type="function">
    <text evidence="1">Component of the Mediator complex, a coactivator involved in the regulated transcription of nearly all RNA polymerase II-dependent genes. Mediator functions as a bridge to convey information from gene-specific regulatory proteins to the basal RNA polymerase II transcription machinery. Mediator is recruited to promoters by direct interactions with regulatory proteins and serves as a scaffold for the assembly of a functional preinitiation complex with RNA polymerase II and the general transcription factors (By similarity).</text>
</comment>
<comment type="subunit">
    <text evidence="1">Component of the Mediator complex.</text>
</comment>
<comment type="subcellular location">
    <subcellularLocation>
        <location evidence="3">Nucleus</location>
    </subcellularLocation>
</comment>
<comment type="similarity">
    <text evidence="3">Belongs to the Mediator complex subunit 8 family.</text>
</comment>
<dbReference type="EMBL" id="CH477697">
    <property type="protein sequence ID" value="EAT37124.1"/>
    <property type="molecule type" value="Genomic_DNA"/>
</dbReference>
<dbReference type="SMR" id="Q16RR7"/>
<dbReference type="FunCoup" id="Q16RR7">
    <property type="interactions" value="1728"/>
</dbReference>
<dbReference type="STRING" id="7159.Q16RR7"/>
<dbReference type="PaxDb" id="7159-AAEL010861-PA"/>
<dbReference type="EnsemblMetazoa" id="AAEL010861-RA">
    <property type="protein sequence ID" value="AAEL010861-PA"/>
    <property type="gene ID" value="AAEL010861"/>
</dbReference>
<dbReference type="GeneID" id="5574022"/>
<dbReference type="KEGG" id="aag:5574022"/>
<dbReference type="CTD" id="112950"/>
<dbReference type="VEuPathDB" id="VectorBase:AAEL010861"/>
<dbReference type="eggNOG" id="KOG3583">
    <property type="taxonomic scope" value="Eukaryota"/>
</dbReference>
<dbReference type="HOGENOM" id="CLU_085476_0_0_1"/>
<dbReference type="InParanoid" id="Q16RR7"/>
<dbReference type="OMA" id="FKLEHEY"/>
<dbReference type="OrthoDB" id="150687at2759"/>
<dbReference type="PhylomeDB" id="Q16RR7"/>
<dbReference type="Proteomes" id="UP000008820">
    <property type="component" value="Chromosome 1"/>
</dbReference>
<dbReference type="Proteomes" id="UP000682892">
    <property type="component" value="Chromosome 3"/>
</dbReference>
<dbReference type="GO" id="GO:0070847">
    <property type="term" value="C:core mediator complex"/>
    <property type="evidence" value="ECO:0007669"/>
    <property type="project" value="TreeGrafter"/>
</dbReference>
<dbReference type="GO" id="GO:0016592">
    <property type="term" value="C:mediator complex"/>
    <property type="evidence" value="ECO:0007669"/>
    <property type="project" value="InterPro"/>
</dbReference>
<dbReference type="GO" id="GO:0000978">
    <property type="term" value="F:RNA polymerase II cis-regulatory region sequence-specific DNA binding"/>
    <property type="evidence" value="ECO:0007669"/>
    <property type="project" value="TreeGrafter"/>
</dbReference>
<dbReference type="GO" id="GO:0003712">
    <property type="term" value="F:transcription coregulator activity"/>
    <property type="evidence" value="ECO:0007669"/>
    <property type="project" value="InterPro"/>
</dbReference>
<dbReference type="GO" id="GO:0006357">
    <property type="term" value="P:regulation of transcription by RNA polymerase II"/>
    <property type="evidence" value="ECO:0007669"/>
    <property type="project" value="InterPro"/>
</dbReference>
<dbReference type="FunFam" id="1.20.58.1710:FF:000001">
    <property type="entry name" value="Mediator of RNA polymerase II transcription subunit 8"/>
    <property type="match status" value="1"/>
</dbReference>
<dbReference type="Gene3D" id="1.20.58.1710">
    <property type="match status" value="1"/>
</dbReference>
<dbReference type="InterPro" id="IPR019364">
    <property type="entry name" value="Mediatior_Med8_fun/met"/>
</dbReference>
<dbReference type="PANTHER" id="PTHR13074">
    <property type="entry name" value="MEDIATOR OF RNA POLYMERASE II TRANSCRIPTION SUBUNIT 8"/>
    <property type="match status" value="1"/>
</dbReference>
<dbReference type="PANTHER" id="PTHR13074:SF9">
    <property type="entry name" value="MEDIATOR OF RNA POLYMERASE II TRANSCRIPTION SUBUNIT 8"/>
    <property type="match status" value="1"/>
</dbReference>
<dbReference type="Pfam" id="PF10232">
    <property type="entry name" value="Med8"/>
    <property type="match status" value="1"/>
</dbReference>
<sequence>MQREEKQMDMLLEAVLNRLNDLKHSIGAMIHRLETEYETINWPTFLDNFALISGHLTGLSKILSSEIGTPLRNLTVLPLLLTPERDEALLQLTEGRIPIFSHDLVPDYLRTKPDPGAESRMAAHEAKANNLQPDTAAKQVAQYNKVISHVWDIVSKAREEWDTEASSRPGIQQTSSLADTQALVAAVGVGNGLTMPVGPGGVPNAGIMIPPAIRQASPMSAVSPGAGPLGKMPSGIKTNIKSANQVHPYR</sequence>
<accession>Q16RR7</accession>
<feature type="chain" id="PRO_0000304529" description="Mediator of RNA polymerase II transcription subunit 8">
    <location>
        <begin position="1"/>
        <end position="250"/>
    </location>
</feature>
<feature type="region of interest" description="Disordered" evidence="2">
    <location>
        <begin position="217"/>
        <end position="250"/>
    </location>
</feature>
<feature type="compositionally biased region" description="Polar residues" evidence="2">
    <location>
        <begin position="236"/>
        <end position="250"/>
    </location>
</feature>
<evidence type="ECO:0000250" key="1"/>
<evidence type="ECO:0000256" key="2">
    <source>
        <dbReference type="SAM" id="MobiDB-lite"/>
    </source>
</evidence>
<evidence type="ECO:0000305" key="3"/>
<name>MED8_AEDAE</name>
<keyword id="KW-0010">Activator</keyword>
<keyword id="KW-0539">Nucleus</keyword>
<keyword id="KW-1185">Reference proteome</keyword>
<keyword id="KW-0804">Transcription</keyword>
<keyword id="KW-0805">Transcription regulation</keyword>